<accession>A9WL73</accession>
<protein>
    <recommendedName>
        <fullName evidence="1">Phosphoenolpyruvate carboxykinase [GTP]</fullName>
        <shortName evidence="1">PEP carboxykinase</shortName>
        <shortName evidence="1">PEPCK</shortName>
        <ecNumber evidence="1">4.1.1.32</ecNumber>
    </recommendedName>
</protein>
<gene>
    <name evidence="1" type="primary">pckG</name>
    <name type="ordered locus">RSal33209_0029</name>
</gene>
<comment type="function">
    <text evidence="1">Catalyzes the conversion of oxaloacetate (OAA) to phosphoenolpyruvate (PEP), the rate-limiting step in the metabolic pathway that produces glucose from lactate and other precursors derived from the citric acid cycle.</text>
</comment>
<comment type="catalytic activity">
    <reaction evidence="1">
        <text>oxaloacetate + GTP = phosphoenolpyruvate + GDP + CO2</text>
        <dbReference type="Rhea" id="RHEA:10388"/>
        <dbReference type="ChEBI" id="CHEBI:16452"/>
        <dbReference type="ChEBI" id="CHEBI:16526"/>
        <dbReference type="ChEBI" id="CHEBI:37565"/>
        <dbReference type="ChEBI" id="CHEBI:58189"/>
        <dbReference type="ChEBI" id="CHEBI:58702"/>
        <dbReference type="EC" id="4.1.1.32"/>
    </reaction>
</comment>
<comment type="cofactor">
    <cofactor evidence="1">
        <name>Mn(2+)</name>
        <dbReference type="ChEBI" id="CHEBI:29035"/>
    </cofactor>
    <text evidence="1">Binds 1 Mn(2+) ion per subunit.</text>
</comment>
<comment type="pathway">
    <text evidence="1">Carbohydrate biosynthesis; gluconeogenesis.</text>
</comment>
<comment type="subunit">
    <text evidence="1">Monomer.</text>
</comment>
<comment type="subcellular location">
    <subcellularLocation>
        <location evidence="1">Cytoplasm</location>
    </subcellularLocation>
</comment>
<comment type="similarity">
    <text evidence="1">Belongs to the phosphoenolpyruvate carboxykinase [GTP] family.</text>
</comment>
<feature type="chain" id="PRO_1000080987" description="Phosphoenolpyruvate carboxykinase [GTP]">
    <location>
        <begin position="1"/>
        <end position="607"/>
    </location>
</feature>
<feature type="active site" evidence="1">
    <location>
        <position position="274"/>
    </location>
</feature>
<feature type="binding site" evidence="1">
    <location>
        <position position="81"/>
    </location>
    <ligand>
        <name>substrate</name>
    </ligand>
</feature>
<feature type="binding site" evidence="1">
    <location>
        <begin position="221"/>
        <end position="223"/>
    </location>
    <ligand>
        <name>substrate</name>
    </ligand>
</feature>
<feature type="binding site" evidence="1">
    <location>
        <position position="230"/>
    </location>
    <ligand>
        <name>Mn(2+)</name>
        <dbReference type="ChEBI" id="CHEBI:29035"/>
    </ligand>
</feature>
<feature type="binding site" evidence="1">
    <location>
        <position position="250"/>
    </location>
    <ligand>
        <name>Mn(2+)</name>
        <dbReference type="ChEBI" id="CHEBI:29035"/>
    </ligand>
</feature>
<feature type="binding site" evidence="1">
    <location>
        <position position="272"/>
    </location>
    <ligand>
        <name>substrate</name>
    </ligand>
</feature>
<feature type="binding site" evidence="1">
    <location>
        <begin position="273"/>
        <end position="278"/>
    </location>
    <ligand>
        <name>GTP</name>
        <dbReference type="ChEBI" id="CHEBI:37565"/>
    </ligand>
</feature>
<feature type="binding site" evidence="1">
    <location>
        <position position="297"/>
    </location>
    <ligand>
        <name>Mn(2+)</name>
        <dbReference type="ChEBI" id="CHEBI:29035"/>
    </ligand>
</feature>
<feature type="binding site" evidence="1">
    <location>
        <begin position="388"/>
        <end position="390"/>
    </location>
    <ligand>
        <name>substrate</name>
    </ligand>
</feature>
<feature type="binding site" evidence="1">
    <location>
        <position position="390"/>
    </location>
    <ligand>
        <name>GTP</name>
        <dbReference type="ChEBI" id="CHEBI:37565"/>
    </ligand>
</feature>
<feature type="binding site" evidence="1">
    <location>
        <position position="421"/>
    </location>
    <ligand>
        <name>GTP</name>
        <dbReference type="ChEBI" id="CHEBI:37565"/>
    </ligand>
</feature>
<feature type="binding site" evidence="1">
    <location>
        <begin position="516"/>
        <end position="519"/>
    </location>
    <ligand>
        <name>GTP</name>
        <dbReference type="ChEBI" id="CHEBI:37565"/>
    </ligand>
</feature>
<keyword id="KW-0963">Cytoplasm</keyword>
<keyword id="KW-0210">Decarboxylase</keyword>
<keyword id="KW-0312">Gluconeogenesis</keyword>
<keyword id="KW-0342">GTP-binding</keyword>
<keyword id="KW-0456">Lyase</keyword>
<keyword id="KW-0464">Manganese</keyword>
<keyword id="KW-0479">Metal-binding</keyword>
<keyword id="KW-0547">Nucleotide-binding</keyword>
<keyword id="KW-1185">Reference proteome</keyword>
<organism>
    <name type="scientific">Renibacterium salmoninarum (strain ATCC 33209 / DSM 20767 / JCM 11484 / NBRC 15589 / NCIMB 2235)</name>
    <dbReference type="NCBI Taxonomy" id="288705"/>
    <lineage>
        <taxon>Bacteria</taxon>
        <taxon>Bacillati</taxon>
        <taxon>Actinomycetota</taxon>
        <taxon>Actinomycetes</taxon>
        <taxon>Micrococcales</taxon>
        <taxon>Micrococcaceae</taxon>
        <taxon>Renibacterium</taxon>
    </lineage>
</organism>
<proteinExistence type="inferred from homology"/>
<dbReference type="EC" id="4.1.1.32" evidence="1"/>
<dbReference type="EMBL" id="CP000910">
    <property type="protein sequence ID" value="ABY21787.1"/>
    <property type="molecule type" value="Genomic_DNA"/>
</dbReference>
<dbReference type="RefSeq" id="WP_012243495.1">
    <property type="nucleotide sequence ID" value="NC_010168.1"/>
</dbReference>
<dbReference type="SMR" id="A9WL73"/>
<dbReference type="STRING" id="288705.RSal33209_0029"/>
<dbReference type="KEGG" id="rsa:RSal33209_0029"/>
<dbReference type="eggNOG" id="COG1274">
    <property type="taxonomic scope" value="Bacteria"/>
</dbReference>
<dbReference type="HOGENOM" id="CLU_028872_1_1_11"/>
<dbReference type="UniPathway" id="UPA00138"/>
<dbReference type="Proteomes" id="UP000002007">
    <property type="component" value="Chromosome"/>
</dbReference>
<dbReference type="GO" id="GO:0005829">
    <property type="term" value="C:cytosol"/>
    <property type="evidence" value="ECO:0007669"/>
    <property type="project" value="TreeGrafter"/>
</dbReference>
<dbReference type="GO" id="GO:0005525">
    <property type="term" value="F:GTP binding"/>
    <property type="evidence" value="ECO:0007669"/>
    <property type="project" value="UniProtKB-UniRule"/>
</dbReference>
<dbReference type="GO" id="GO:0030145">
    <property type="term" value="F:manganese ion binding"/>
    <property type="evidence" value="ECO:0007669"/>
    <property type="project" value="UniProtKB-UniRule"/>
</dbReference>
<dbReference type="GO" id="GO:0004613">
    <property type="term" value="F:phosphoenolpyruvate carboxykinase (GTP) activity"/>
    <property type="evidence" value="ECO:0007669"/>
    <property type="project" value="UniProtKB-UniRule"/>
</dbReference>
<dbReference type="GO" id="GO:0071333">
    <property type="term" value="P:cellular response to glucose stimulus"/>
    <property type="evidence" value="ECO:0007669"/>
    <property type="project" value="TreeGrafter"/>
</dbReference>
<dbReference type="GO" id="GO:0006094">
    <property type="term" value="P:gluconeogenesis"/>
    <property type="evidence" value="ECO:0007669"/>
    <property type="project" value="UniProtKB-UniRule"/>
</dbReference>
<dbReference type="GO" id="GO:0046327">
    <property type="term" value="P:glycerol biosynthetic process from pyruvate"/>
    <property type="evidence" value="ECO:0007669"/>
    <property type="project" value="TreeGrafter"/>
</dbReference>
<dbReference type="GO" id="GO:0006107">
    <property type="term" value="P:oxaloacetate metabolic process"/>
    <property type="evidence" value="ECO:0007669"/>
    <property type="project" value="TreeGrafter"/>
</dbReference>
<dbReference type="GO" id="GO:0019543">
    <property type="term" value="P:propionate catabolic process"/>
    <property type="evidence" value="ECO:0007669"/>
    <property type="project" value="TreeGrafter"/>
</dbReference>
<dbReference type="GO" id="GO:0033993">
    <property type="term" value="P:response to lipid"/>
    <property type="evidence" value="ECO:0007669"/>
    <property type="project" value="TreeGrafter"/>
</dbReference>
<dbReference type="GO" id="GO:0042594">
    <property type="term" value="P:response to starvation"/>
    <property type="evidence" value="ECO:0007669"/>
    <property type="project" value="TreeGrafter"/>
</dbReference>
<dbReference type="CDD" id="cd00819">
    <property type="entry name" value="PEPCK_GTP"/>
    <property type="match status" value="1"/>
</dbReference>
<dbReference type="FunFam" id="3.40.449.10:FF:000005">
    <property type="entry name" value="Phosphoenolpyruvate carboxykinase [GTP]"/>
    <property type="match status" value="1"/>
</dbReference>
<dbReference type="Gene3D" id="3.90.228.20">
    <property type="match status" value="1"/>
</dbReference>
<dbReference type="Gene3D" id="3.40.449.10">
    <property type="entry name" value="Phosphoenolpyruvate Carboxykinase, domain 1"/>
    <property type="match status" value="1"/>
</dbReference>
<dbReference type="Gene3D" id="2.170.8.10">
    <property type="entry name" value="Phosphoenolpyruvate Carboxykinase, domain 2"/>
    <property type="match status" value="1"/>
</dbReference>
<dbReference type="HAMAP" id="MF_00452">
    <property type="entry name" value="PEPCK_GTP"/>
    <property type="match status" value="1"/>
</dbReference>
<dbReference type="InterPro" id="IPR018091">
    <property type="entry name" value="PEP_carboxykin_GTP_CS"/>
</dbReference>
<dbReference type="InterPro" id="IPR013035">
    <property type="entry name" value="PEP_carboxykinase_C"/>
</dbReference>
<dbReference type="InterPro" id="IPR008209">
    <property type="entry name" value="PEP_carboxykinase_GTP"/>
</dbReference>
<dbReference type="InterPro" id="IPR035077">
    <property type="entry name" value="PEP_carboxykinase_GTP_C"/>
</dbReference>
<dbReference type="InterPro" id="IPR035078">
    <property type="entry name" value="PEP_carboxykinase_GTP_N"/>
</dbReference>
<dbReference type="InterPro" id="IPR008210">
    <property type="entry name" value="PEP_carboxykinase_N"/>
</dbReference>
<dbReference type="NCBIfam" id="NF003253">
    <property type="entry name" value="PRK04210.1"/>
    <property type="match status" value="1"/>
</dbReference>
<dbReference type="PANTHER" id="PTHR11561">
    <property type="entry name" value="PHOSPHOENOLPYRUVATE CARBOXYKINASE"/>
    <property type="match status" value="1"/>
</dbReference>
<dbReference type="PANTHER" id="PTHR11561:SF0">
    <property type="entry name" value="PHOSPHOENOLPYRUVATE CARBOXYKINASE [GTP]-RELATED"/>
    <property type="match status" value="1"/>
</dbReference>
<dbReference type="Pfam" id="PF00821">
    <property type="entry name" value="PEPCK_GTP"/>
    <property type="match status" value="1"/>
</dbReference>
<dbReference type="Pfam" id="PF17297">
    <property type="entry name" value="PEPCK_N"/>
    <property type="match status" value="1"/>
</dbReference>
<dbReference type="PIRSF" id="PIRSF001348">
    <property type="entry name" value="PEP_carboxykinase_GTP"/>
    <property type="match status" value="1"/>
</dbReference>
<dbReference type="SUPFAM" id="SSF68923">
    <property type="entry name" value="PEP carboxykinase N-terminal domain"/>
    <property type="match status" value="1"/>
</dbReference>
<dbReference type="SUPFAM" id="SSF53795">
    <property type="entry name" value="PEP carboxykinase-like"/>
    <property type="match status" value="1"/>
</dbReference>
<dbReference type="PROSITE" id="PS00505">
    <property type="entry name" value="PEPCK_GTP"/>
    <property type="match status" value="1"/>
</dbReference>
<reference key="1">
    <citation type="journal article" date="2008" name="J. Bacteriol.">
        <title>Genome sequence of the fish pathogen Renibacterium salmoninarum suggests reductive evolution away from an environmental Arthrobacter ancestor.</title>
        <authorList>
            <person name="Wiens G.D."/>
            <person name="Rockey D.D."/>
            <person name="Wu Z."/>
            <person name="Chang J."/>
            <person name="Levy R."/>
            <person name="Crane S."/>
            <person name="Chen D.S."/>
            <person name="Capri G.R."/>
            <person name="Burnett J.R."/>
            <person name="Sudheesh P.S."/>
            <person name="Schipma M.J."/>
            <person name="Burd H."/>
            <person name="Bhattacharyya A."/>
            <person name="Rhodes L.D."/>
            <person name="Kaul R."/>
            <person name="Strom M.S."/>
        </authorList>
    </citation>
    <scope>NUCLEOTIDE SEQUENCE [LARGE SCALE GENOMIC DNA]</scope>
    <source>
        <strain>ATCC 33209 / DSM 20767 / JCM 11484 / NBRC 15589 / NCIMB 2235</strain>
    </source>
</reference>
<sequence length="607" mass="66756">MGLTAQPVLDTAPTTNKRLLDWVAEVAELTQPESIYWVDGSEAENTRLTDELVAAGTLTRLNPELFPNSFAGFSDPKDVARVEEQTFICSEKEHDAGFTNNWMEPAEMRTKLSGLFKGSMRGRTMYVIPFVMGHLDAKSPKFGVEITDSAYVVASMRIMARIGTEVLRKIEEPDAFFVPAIHSLGAPLEPGQADVPWPCNDEKWIVHFPESREIWSYGSGYGGNALLGKKCYALRIASVMAHDEGWLAEHMLILKLTSPEQKTYYMAAAFPSACGKTNLALLDPTIKGWKVETLGDDITWMNFDDEGALRAVNPEAGLFGVAPGTGWDTNPNAMRAIAKGNSIFTNVALTDDGGVWWEGMTTETPSHLTDWRGNSWTPDSAEPAAHPNSRFCTPIDQIDMLAPEYNEPDGVPLSAILFGGRRKTTIPLVTQSRDWTNGIFMGSTLSSETTAAAAGAVGVVRRDPMAMLPFIGYDAGDYLKHWVELSKQGDQEKLPKIFLVNWFRRTADGGFAWPGFGDNSRVVTWAIERIEGKADAVETPIGFVPTKESLDLDGLDISDEQLSAALNVDALEWAAEAESIDEWYRRFGGSLPEELLGELEGLKERLG</sequence>
<name>PCKG_RENSM</name>
<evidence type="ECO:0000255" key="1">
    <source>
        <dbReference type="HAMAP-Rule" id="MF_00452"/>
    </source>
</evidence>